<dbReference type="EC" id="2.5.1.78" evidence="1"/>
<dbReference type="EMBL" id="CP000241">
    <property type="protein sequence ID" value="ABF84069.1"/>
    <property type="molecule type" value="Genomic_DNA"/>
</dbReference>
<dbReference type="RefSeq" id="WP_001165620.1">
    <property type="nucleotide sequence ID" value="NC_008086.1"/>
</dbReference>
<dbReference type="SMR" id="Q1CVF3"/>
<dbReference type="KEGG" id="hpa:HPAG1_0002"/>
<dbReference type="HOGENOM" id="CLU_089358_1_1_7"/>
<dbReference type="UniPathway" id="UPA00275">
    <property type="reaction ID" value="UER00404"/>
</dbReference>
<dbReference type="GO" id="GO:0005829">
    <property type="term" value="C:cytosol"/>
    <property type="evidence" value="ECO:0007669"/>
    <property type="project" value="TreeGrafter"/>
</dbReference>
<dbReference type="GO" id="GO:0009349">
    <property type="term" value="C:riboflavin synthase complex"/>
    <property type="evidence" value="ECO:0007669"/>
    <property type="project" value="InterPro"/>
</dbReference>
<dbReference type="GO" id="GO:0000906">
    <property type="term" value="F:6,7-dimethyl-8-ribityllumazine synthase activity"/>
    <property type="evidence" value="ECO:0007669"/>
    <property type="project" value="UniProtKB-UniRule"/>
</dbReference>
<dbReference type="GO" id="GO:0009231">
    <property type="term" value="P:riboflavin biosynthetic process"/>
    <property type="evidence" value="ECO:0007669"/>
    <property type="project" value="UniProtKB-UniRule"/>
</dbReference>
<dbReference type="CDD" id="cd09209">
    <property type="entry name" value="Lumazine_synthase-I"/>
    <property type="match status" value="1"/>
</dbReference>
<dbReference type="FunFam" id="3.40.50.960:FF:000001">
    <property type="entry name" value="6,7-dimethyl-8-ribityllumazine synthase"/>
    <property type="match status" value="1"/>
</dbReference>
<dbReference type="Gene3D" id="3.40.50.960">
    <property type="entry name" value="Lumazine/riboflavin synthase"/>
    <property type="match status" value="1"/>
</dbReference>
<dbReference type="HAMAP" id="MF_00178">
    <property type="entry name" value="Lumazine_synth"/>
    <property type="match status" value="1"/>
</dbReference>
<dbReference type="InterPro" id="IPR034964">
    <property type="entry name" value="LS"/>
</dbReference>
<dbReference type="InterPro" id="IPR002180">
    <property type="entry name" value="LS/RS"/>
</dbReference>
<dbReference type="InterPro" id="IPR036467">
    <property type="entry name" value="LS/RS_sf"/>
</dbReference>
<dbReference type="NCBIfam" id="TIGR00114">
    <property type="entry name" value="lumazine-synth"/>
    <property type="match status" value="1"/>
</dbReference>
<dbReference type="PANTHER" id="PTHR21058:SF0">
    <property type="entry name" value="6,7-DIMETHYL-8-RIBITYLLUMAZINE SYNTHASE"/>
    <property type="match status" value="1"/>
</dbReference>
<dbReference type="PANTHER" id="PTHR21058">
    <property type="entry name" value="6,7-DIMETHYL-8-RIBITYLLUMAZINE SYNTHASE DMRL SYNTHASE LUMAZINE SYNTHASE"/>
    <property type="match status" value="1"/>
</dbReference>
<dbReference type="Pfam" id="PF00885">
    <property type="entry name" value="DMRL_synthase"/>
    <property type="match status" value="1"/>
</dbReference>
<dbReference type="SUPFAM" id="SSF52121">
    <property type="entry name" value="Lumazine synthase"/>
    <property type="match status" value="1"/>
</dbReference>
<organism>
    <name type="scientific">Helicobacter pylori (strain HPAG1)</name>
    <dbReference type="NCBI Taxonomy" id="357544"/>
    <lineage>
        <taxon>Bacteria</taxon>
        <taxon>Pseudomonadati</taxon>
        <taxon>Campylobacterota</taxon>
        <taxon>Epsilonproteobacteria</taxon>
        <taxon>Campylobacterales</taxon>
        <taxon>Helicobacteraceae</taxon>
        <taxon>Helicobacter</taxon>
    </lineage>
</organism>
<proteinExistence type="inferred from homology"/>
<accession>Q1CVF3</accession>
<reference key="1">
    <citation type="journal article" date="2006" name="Proc. Natl. Acad. Sci. U.S.A.">
        <title>The complete genome sequence of a chronic atrophic gastritis Helicobacter pylori strain: evolution during disease progression.</title>
        <authorList>
            <person name="Oh J.D."/>
            <person name="Kling-Baeckhed H."/>
            <person name="Giannakis M."/>
            <person name="Xu J."/>
            <person name="Fulton R.S."/>
            <person name="Fulton L.A."/>
            <person name="Cordum H.S."/>
            <person name="Wang C."/>
            <person name="Elliott G."/>
            <person name="Edwards J."/>
            <person name="Mardis E.R."/>
            <person name="Engstrand L.G."/>
            <person name="Gordon J.I."/>
        </authorList>
    </citation>
    <scope>NUCLEOTIDE SEQUENCE [LARGE SCALE GENOMIC DNA]</scope>
    <source>
        <strain>HPAG1</strain>
    </source>
</reference>
<gene>
    <name evidence="1" type="primary">ribH</name>
    <name type="ordered locus">HPAG1_0002</name>
</gene>
<keyword id="KW-0686">Riboflavin biosynthesis</keyword>
<keyword id="KW-0808">Transferase</keyword>
<protein>
    <recommendedName>
        <fullName evidence="1">6,7-dimethyl-8-ribityllumazine synthase</fullName>
        <shortName evidence="1">DMRL synthase</shortName>
        <shortName evidence="1">LS</shortName>
        <shortName evidence="1">Lumazine synthase</shortName>
        <ecNumber evidence="1">2.5.1.78</ecNumber>
    </recommendedName>
</protein>
<feature type="chain" id="PRO_1000040433" description="6,7-dimethyl-8-ribityllumazine synthase">
    <location>
        <begin position="1"/>
        <end position="156"/>
    </location>
</feature>
<feature type="active site" description="Proton donor" evidence="1">
    <location>
        <position position="89"/>
    </location>
</feature>
<feature type="binding site" evidence="1">
    <location>
        <position position="23"/>
    </location>
    <ligand>
        <name>5-amino-6-(D-ribitylamino)uracil</name>
        <dbReference type="ChEBI" id="CHEBI:15934"/>
    </ligand>
</feature>
<feature type="binding site" evidence="1">
    <location>
        <begin position="57"/>
        <end position="59"/>
    </location>
    <ligand>
        <name>5-amino-6-(D-ribitylamino)uracil</name>
        <dbReference type="ChEBI" id="CHEBI:15934"/>
    </ligand>
</feature>
<feature type="binding site" evidence="1">
    <location>
        <begin position="81"/>
        <end position="83"/>
    </location>
    <ligand>
        <name>5-amino-6-(D-ribitylamino)uracil</name>
        <dbReference type="ChEBI" id="CHEBI:15934"/>
    </ligand>
</feature>
<feature type="binding site" evidence="1">
    <location>
        <begin position="86"/>
        <end position="87"/>
    </location>
    <ligand>
        <name>(2S)-2-hydroxy-3-oxobutyl phosphate</name>
        <dbReference type="ChEBI" id="CHEBI:58830"/>
    </ligand>
</feature>
<feature type="binding site" evidence="1">
    <location>
        <position position="114"/>
    </location>
    <ligand>
        <name>5-amino-6-(D-ribitylamino)uracil</name>
        <dbReference type="ChEBI" id="CHEBI:15934"/>
    </ligand>
</feature>
<feature type="binding site" evidence="1">
    <location>
        <position position="128"/>
    </location>
    <ligand>
        <name>(2S)-2-hydroxy-3-oxobutyl phosphate</name>
        <dbReference type="ChEBI" id="CHEBI:58830"/>
    </ligand>
</feature>
<sequence>MQIIEGKLQLQGNERVAILTSRFNHIITDRLKEGAMDCFKRHGGDEDLLDIVLVPGAYELPLILDKLLESGKYDGVCVLGAIIRGGTPHFDYVSAEATKGIASAMLKYSMPVSFGVLTTDNIEQAIERAGSKAGNKGFEAMSTLIELLSLCQTLKG</sequence>
<comment type="function">
    <text evidence="1">Catalyzes the formation of 6,7-dimethyl-8-ribityllumazine by condensation of 5-amino-6-(D-ribitylamino)uracil with 3,4-dihydroxy-2-butanone 4-phosphate. This is the penultimate step in the biosynthesis of riboflavin.</text>
</comment>
<comment type="catalytic activity">
    <reaction evidence="1">
        <text>(2S)-2-hydroxy-3-oxobutyl phosphate + 5-amino-6-(D-ribitylamino)uracil = 6,7-dimethyl-8-(1-D-ribityl)lumazine + phosphate + 2 H2O + H(+)</text>
        <dbReference type="Rhea" id="RHEA:26152"/>
        <dbReference type="ChEBI" id="CHEBI:15377"/>
        <dbReference type="ChEBI" id="CHEBI:15378"/>
        <dbReference type="ChEBI" id="CHEBI:15934"/>
        <dbReference type="ChEBI" id="CHEBI:43474"/>
        <dbReference type="ChEBI" id="CHEBI:58201"/>
        <dbReference type="ChEBI" id="CHEBI:58830"/>
        <dbReference type="EC" id="2.5.1.78"/>
    </reaction>
</comment>
<comment type="pathway">
    <text evidence="1">Cofactor biosynthesis; riboflavin biosynthesis; riboflavin from 2-hydroxy-3-oxobutyl phosphate and 5-amino-6-(D-ribitylamino)uracil: step 1/2.</text>
</comment>
<comment type="similarity">
    <text evidence="1">Belongs to the DMRL synthase family.</text>
</comment>
<evidence type="ECO:0000255" key="1">
    <source>
        <dbReference type="HAMAP-Rule" id="MF_00178"/>
    </source>
</evidence>
<name>RISB_HELPH</name>